<proteinExistence type="inferred from homology"/>
<gene>
    <name evidence="2" type="primary">TMEM258</name>
</gene>
<name>TM258_BOVIN</name>
<feature type="chain" id="PRO_0000235832" description="Dolichyl-diphosphooligosaccharide--protein glycosyltransferase subunit TMEM258">
    <location>
        <begin position="1"/>
        <end position="79"/>
    </location>
</feature>
<feature type="transmembrane region" description="Helical" evidence="4">
    <location>
        <begin position="17"/>
        <end position="37"/>
    </location>
</feature>
<feature type="transmembrane region" description="Helical" evidence="4">
    <location>
        <begin position="59"/>
        <end position="79"/>
    </location>
</feature>
<feature type="modified residue" description="N-acetylmethionine" evidence="2">
    <location>
        <position position="1"/>
    </location>
</feature>
<protein>
    <recommendedName>
        <fullName>Dolichyl-diphosphooligosaccharide--protein glycosyltransferase subunit TMEM258</fullName>
        <shortName>Oligosaccharyl transferase subunit TMEM258</shortName>
    </recommendedName>
    <alternativeName>
        <fullName evidence="2">Transmembrane protein 258</fullName>
    </alternativeName>
</protein>
<accession>Q32P84</accession>
<organism>
    <name type="scientific">Bos taurus</name>
    <name type="common">Bovine</name>
    <dbReference type="NCBI Taxonomy" id="9913"/>
    <lineage>
        <taxon>Eukaryota</taxon>
        <taxon>Metazoa</taxon>
        <taxon>Chordata</taxon>
        <taxon>Craniata</taxon>
        <taxon>Vertebrata</taxon>
        <taxon>Euteleostomi</taxon>
        <taxon>Mammalia</taxon>
        <taxon>Eutheria</taxon>
        <taxon>Laurasiatheria</taxon>
        <taxon>Artiodactyla</taxon>
        <taxon>Ruminantia</taxon>
        <taxon>Pecora</taxon>
        <taxon>Bovidae</taxon>
        <taxon>Bovinae</taxon>
        <taxon>Bos</taxon>
    </lineage>
</organism>
<dbReference type="EMBL" id="BC108218">
    <property type="protein sequence ID" value="AAI08219.1"/>
    <property type="molecule type" value="mRNA"/>
</dbReference>
<dbReference type="RefSeq" id="NP_001181992.1">
    <property type="nucleotide sequence ID" value="NM_001195063.1"/>
</dbReference>
<dbReference type="SMR" id="Q32P84"/>
<dbReference type="FunCoup" id="Q32P84">
    <property type="interactions" value="1037"/>
</dbReference>
<dbReference type="STRING" id="9913.ENSBTAP00000043516"/>
<dbReference type="PaxDb" id="9913-ENSBTAP00000043516"/>
<dbReference type="Ensembl" id="ENSBTAT00000046195.3">
    <property type="protein sequence ID" value="ENSBTAP00000043516.2"/>
    <property type="gene ID" value="ENSBTAG00000032557.3"/>
</dbReference>
<dbReference type="GeneID" id="767958"/>
<dbReference type="KEGG" id="bta:767958"/>
<dbReference type="CTD" id="746"/>
<dbReference type="VEuPathDB" id="HostDB:ENSBTAG00000032557"/>
<dbReference type="VGNC" id="VGNC:36066">
    <property type="gene designation" value="TMEM258"/>
</dbReference>
<dbReference type="eggNOG" id="KOG4452">
    <property type="taxonomic scope" value="Eukaryota"/>
</dbReference>
<dbReference type="GeneTree" id="ENSGT00390000010089"/>
<dbReference type="HOGENOM" id="CLU_180449_0_0_1"/>
<dbReference type="InParanoid" id="Q32P84"/>
<dbReference type="OMA" id="MERYVGP"/>
<dbReference type="OrthoDB" id="18408at2759"/>
<dbReference type="TreeFam" id="TF300295"/>
<dbReference type="UniPathway" id="UPA00378"/>
<dbReference type="Proteomes" id="UP000009136">
    <property type="component" value="Chromosome 29"/>
</dbReference>
<dbReference type="Bgee" id="ENSBTAG00000032557">
    <property type="expression patterns" value="Expressed in semen and 106 other cell types or tissues"/>
</dbReference>
<dbReference type="GO" id="GO:0005737">
    <property type="term" value="C:cytoplasm"/>
    <property type="evidence" value="ECO:0000250"/>
    <property type="project" value="UniProtKB"/>
</dbReference>
<dbReference type="GO" id="GO:0005789">
    <property type="term" value="C:endoplasmic reticulum membrane"/>
    <property type="evidence" value="ECO:0000318"/>
    <property type="project" value="GO_Central"/>
</dbReference>
<dbReference type="GO" id="GO:0016020">
    <property type="term" value="C:membrane"/>
    <property type="evidence" value="ECO:0000250"/>
    <property type="project" value="UniProtKB"/>
</dbReference>
<dbReference type="GO" id="GO:0160226">
    <property type="term" value="C:oligosaccharyltransferase complex A"/>
    <property type="evidence" value="ECO:0007669"/>
    <property type="project" value="Ensembl"/>
</dbReference>
<dbReference type="GO" id="GO:0160227">
    <property type="term" value="C:oligosaccharyltransferase complex B"/>
    <property type="evidence" value="ECO:0007669"/>
    <property type="project" value="Ensembl"/>
</dbReference>
<dbReference type="GO" id="GO:0062062">
    <property type="term" value="F:oligosaccharyltransferase complex binding"/>
    <property type="evidence" value="ECO:0000318"/>
    <property type="project" value="GO_Central"/>
</dbReference>
<dbReference type="GO" id="GO:1904019">
    <property type="term" value="P:epithelial cell apoptotic process"/>
    <property type="evidence" value="ECO:0007669"/>
    <property type="project" value="Ensembl"/>
</dbReference>
<dbReference type="GO" id="GO:0006954">
    <property type="term" value="P:inflammatory response"/>
    <property type="evidence" value="ECO:0007669"/>
    <property type="project" value="Ensembl"/>
</dbReference>
<dbReference type="GO" id="GO:0006487">
    <property type="term" value="P:protein N-linked glycosylation"/>
    <property type="evidence" value="ECO:0007669"/>
    <property type="project" value="Ensembl"/>
</dbReference>
<dbReference type="GO" id="GO:0034976">
    <property type="term" value="P:response to endoplasmic reticulum stress"/>
    <property type="evidence" value="ECO:0000318"/>
    <property type="project" value="GO_Central"/>
</dbReference>
<dbReference type="InterPro" id="IPR007915">
    <property type="entry name" value="TMEM258/Ost5"/>
</dbReference>
<dbReference type="PANTHER" id="PTHR13636">
    <property type="entry name" value="TRANSMEMBRANE PROTEIN 258"/>
    <property type="match status" value="1"/>
</dbReference>
<dbReference type="Pfam" id="PF05251">
    <property type="entry name" value="Ost5"/>
    <property type="match status" value="1"/>
</dbReference>
<reference key="1">
    <citation type="submission" date="2005-10" db="EMBL/GenBank/DDBJ databases">
        <authorList>
            <consortium name="NIH - Mammalian Gene Collection (MGC) project"/>
        </authorList>
    </citation>
    <scope>NUCLEOTIDE SEQUENCE [LARGE SCALE MRNA]</scope>
    <source>
        <strain>Crossbred X Angus</strain>
        <tissue>Liver</tissue>
    </source>
</reference>
<comment type="function">
    <text evidence="2 3">Subunit of the oligosaccharyl transferase (OST) complex that catalyzes the initial transfer of a defined glycan (Glc(3)Man(9)GlcNAc(2) in eukaryotes) from the lipid carrier dolichol-pyrophosphate to an asparagine residue within an Asn-X-Ser/Thr consensus motif in nascent polypeptide chains, the first step in protein N-glycosylation (By similarity). N-glycosylation occurs cotranslationally and the complex associates with the Sec61 complex at the channel-forming translocon complex that mediates protein translocation across the endoplasmic reticulum (ER). All subunits are required for a maximal enzyme activity (By similarity). Involved in ER homeostasis in the colonic epithelium (By similarity).</text>
</comment>
<comment type="pathway">
    <text evidence="2">Protein modification; protein glycosylation.</text>
</comment>
<comment type="subunit">
    <text evidence="1 2">Component of the oligosaccharyltransferase (OST) complex (By similarity). OST exists in two different complex forms which contain common core subunits RPN1, RPN2, OST48, OST4, DAD1 and TMEM258, either STT3A or STT3B as catalytic subunits, and form-specific accessory subunits (By similarity). STT3A complex assembly occurs through the formation of 3 subcomplexes. Subcomplex 1 contains RPN1 and TMEM258, subcomplex 2 contains the STT3A-specific subunits STT3A, DC2/OSTC, and KCP2 as well as the core subunit OST4, and subcomplex 3 contains RPN2, DAD1, and OST48. The STT3A complex can form stable complexes with the Sec61 complex or with both the Sec61 and TRAP complexes (By similarity).</text>
</comment>
<comment type="subcellular location">
    <subcellularLocation>
        <location evidence="2">Membrane</location>
        <topology evidence="2">Multi-pass membrane protein</topology>
    </subcellularLocation>
    <subcellularLocation>
        <location evidence="2">Endoplasmic reticulum</location>
    </subcellularLocation>
    <subcellularLocation>
        <location evidence="2">Cytoplasm</location>
    </subcellularLocation>
</comment>
<comment type="similarity">
    <text evidence="5">Belongs to the OST5 family.</text>
</comment>
<sequence>MELEAMSRYTSPVNPAVFPHLTVVLLAIGMFFTAWFFVYEVTSTKYTRDIYKELLISLVASLFMGFGVLFLLLWVGIYI</sequence>
<keyword id="KW-0007">Acetylation</keyword>
<keyword id="KW-0963">Cytoplasm</keyword>
<keyword id="KW-0256">Endoplasmic reticulum</keyword>
<keyword id="KW-0472">Membrane</keyword>
<keyword id="KW-1185">Reference proteome</keyword>
<keyword id="KW-0812">Transmembrane</keyword>
<keyword id="KW-1133">Transmembrane helix</keyword>
<evidence type="ECO:0000250" key="1">
    <source>
        <dbReference type="UniProtKB" id="E2RKN8"/>
    </source>
</evidence>
<evidence type="ECO:0000250" key="2">
    <source>
        <dbReference type="UniProtKB" id="P61165"/>
    </source>
</evidence>
<evidence type="ECO:0000250" key="3">
    <source>
        <dbReference type="UniProtKB" id="P61166"/>
    </source>
</evidence>
<evidence type="ECO:0000255" key="4"/>
<evidence type="ECO:0000305" key="5"/>